<feature type="chain" id="PRO_0000205666" description="Tropomyosin">
    <location>
        <begin position="1"/>
        <end position="284"/>
    </location>
</feature>
<feature type="region of interest" description="Disordered" evidence="2">
    <location>
        <begin position="202"/>
        <end position="223"/>
    </location>
</feature>
<feature type="coiled-coil region" evidence="1">
    <location>
        <begin position="1"/>
        <end position="284"/>
    </location>
</feature>
<feature type="compositionally biased region" description="Polar residues" evidence="2">
    <location>
        <begin position="202"/>
        <end position="213"/>
    </location>
</feature>
<feature type="compositionally biased region" description="Basic and acidic residues" evidence="2">
    <location>
        <begin position="214"/>
        <end position="223"/>
    </location>
</feature>
<evidence type="ECO:0000250" key="1"/>
<evidence type="ECO:0000256" key="2">
    <source>
        <dbReference type="SAM" id="MobiDB-lite"/>
    </source>
</evidence>
<evidence type="ECO:0000305" key="3"/>
<accession>Q25145</accession>
<dbReference type="EMBL" id="X75218">
    <property type="protein sequence ID" value="CAA53028.1"/>
    <property type="molecule type" value="mRNA"/>
</dbReference>
<dbReference type="PIR" id="S38381">
    <property type="entry name" value="S38381"/>
</dbReference>
<dbReference type="SMR" id="Q25145"/>
<dbReference type="OrthoDB" id="128924at2759"/>
<dbReference type="FunFam" id="1.20.5.170:FF:000005">
    <property type="entry name" value="Tropomyosin alpha-1 chain"/>
    <property type="match status" value="1"/>
</dbReference>
<dbReference type="FunFam" id="1.20.5.170:FF:000001">
    <property type="entry name" value="Tropomyosin alpha-1 chain isoform 1"/>
    <property type="match status" value="1"/>
</dbReference>
<dbReference type="FunFam" id="1.20.5.340:FF:000001">
    <property type="entry name" value="Tropomyosin alpha-1 chain isoform 2"/>
    <property type="match status" value="1"/>
</dbReference>
<dbReference type="Gene3D" id="1.20.5.170">
    <property type="match status" value="2"/>
</dbReference>
<dbReference type="Gene3D" id="1.20.5.340">
    <property type="match status" value="1"/>
</dbReference>
<dbReference type="InterPro" id="IPR000533">
    <property type="entry name" value="Tropomyosin"/>
</dbReference>
<dbReference type="PANTHER" id="PTHR19269">
    <property type="entry name" value="TROPOMYOSIN"/>
    <property type="match status" value="1"/>
</dbReference>
<dbReference type="Pfam" id="PF00261">
    <property type="entry name" value="Tropomyosin"/>
    <property type="match status" value="1"/>
</dbReference>
<dbReference type="PRINTS" id="PR00194">
    <property type="entry name" value="TROPOMYOSIN"/>
</dbReference>
<dbReference type="SUPFAM" id="SSF57997">
    <property type="entry name" value="Tropomyosin"/>
    <property type="match status" value="1"/>
</dbReference>
<dbReference type="PROSITE" id="PS00326">
    <property type="entry name" value="TROPOMYOSIN"/>
    <property type="match status" value="1"/>
</dbReference>
<keyword id="KW-0175">Coiled coil</keyword>
<keyword id="KW-0677">Repeat</keyword>
<protein>
    <recommendedName>
        <fullName>Tropomyosin</fullName>
    </recommendedName>
</protein>
<name>TPM_HALRU</name>
<organism>
    <name type="scientific">Haliotis rufescens</name>
    <name type="common">California red abalone</name>
    <dbReference type="NCBI Taxonomy" id="6454"/>
    <lineage>
        <taxon>Eukaryota</taxon>
        <taxon>Metazoa</taxon>
        <taxon>Spiralia</taxon>
        <taxon>Lophotrochozoa</taxon>
        <taxon>Mollusca</taxon>
        <taxon>Gastropoda</taxon>
        <taxon>Vetigastropoda</taxon>
        <taxon>Lepetellida</taxon>
        <taxon>Haliotoidea</taxon>
        <taxon>Haliotidae</taxon>
        <taxon>Haliotis</taxon>
    </lineage>
</organism>
<reference key="1">
    <citation type="journal article" date="1997" name="Dev. Genes Evol.">
        <title>Regulation of tropomyosin gene expression and metamorphic differs among muscle systems examined at morphosis of the gastropod Haliotis rufescens.</title>
        <authorList>
            <person name="Degnan B.M."/>
            <person name="Degnan S.M."/>
            <person name="Morse D.E."/>
        </authorList>
    </citation>
    <scope>NUCLEOTIDE SEQUENCE [MRNA]</scope>
</reference>
<proteinExistence type="evidence at transcript level"/>
<sequence length="284" mass="32773">MDAIKKKMLAMKMEKENAVDRAEQNEQKLRDTEEQKAKIEEDLNNLQKKCANLENDFDSVNEQVQVAMAKLETSEKRVTEMEQEVSGTTRKITLLEEDLERNEERLQTATERLEEASKLPDESERGARVLESRSLADDERIDQLEAQLKEAKYIAEDAERKYDEAARKLAITEVDLERAEARPKAAEAKILELEEELKVVGNNTKSLEISEQEASQREDSYEETIRDLTQRLKDAENRATEAERTVSKLQKEVDRLEDELLAEKEKYKAISDELDQTFAELAGY</sequence>
<comment type="function">
    <text>Tropomyosin, in association with the troponin complex, plays a central role in the calcium dependent regulation of muscle contraction.</text>
</comment>
<comment type="subunit">
    <text evidence="1">Homodimer.</text>
</comment>
<comment type="domain">
    <text>The molecule is in a coiled coil structure that is formed by 2 polypeptide chains. The sequence exhibits a prominent seven-residues periodicity.</text>
</comment>
<comment type="similarity">
    <text evidence="3">Belongs to the tropomyosin family.</text>
</comment>